<proteinExistence type="inferred from homology"/>
<feature type="chain" id="PRO_1000051661" description="L-threonine 3-dehydrogenase">
    <location>
        <begin position="1"/>
        <end position="341"/>
    </location>
</feature>
<feature type="active site" description="Charge relay system" evidence="1">
    <location>
        <position position="40"/>
    </location>
</feature>
<feature type="active site" description="Charge relay system" evidence="1">
    <location>
        <position position="43"/>
    </location>
</feature>
<feature type="binding site" evidence="1">
    <location>
        <position position="38"/>
    </location>
    <ligand>
        <name>Zn(2+)</name>
        <dbReference type="ChEBI" id="CHEBI:29105"/>
        <label>1</label>
        <note>catalytic</note>
    </ligand>
</feature>
<feature type="binding site" evidence="1">
    <location>
        <position position="63"/>
    </location>
    <ligand>
        <name>Zn(2+)</name>
        <dbReference type="ChEBI" id="CHEBI:29105"/>
        <label>1</label>
        <note>catalytic</note>
    </ligand>
</feature>
<feature type="binding site" evidence="1">
    <location>
        <position position="64"/>
    </location>
    <ligand>
        <name>Zn(2+)</name>
        <dbReference type="ChEBI" id="CHEBI:29105"/>
        <label>1</label>
        <note>catalytic</note>
    </ligand>
</feature>
<feature type="binding site" evidence="1">
    <location>
        <position position="93"/>
    </location>
    <ligand>
        <name>Zn(2+)</name>
        <dbReference type="ChEBI" id="CHEBI:29105"/>
        <label>2</label>
    </ligand>
</feature>
<feature type="binding site" evidence="1">
    <location>
        <position position="96"/>
    </location>
    <ligand>
        <name>Zn(2+)</name>
        <dbReference type="ChEBI" id="CHEBI:29105"/>
        <label>2</label>
    </ligand>
</feature>
<feature type="binding site" evidence="1">
    <location>
        <position position="99"/>
    </location>
    <ligand>
        <name>Zn(2+)</name>
        <dbReference type="ChEBI" id="CHEBI:29105"/>
        <label>2</label>
    </ligand>
</feature>
<feature type="binding site" evidence="1">
    <location>
        <position position="107"/>
    </location>
    <ligand>
        <name>Zn(2+)</name>
        <dbReference type="ChEBI" id="CHEBI:29105"/>
        <label>2</label>
    </ligand>
</feature>
<feature type="binding site" evidence="1">
    <location>
        <position position="175"/>
    </location>
    <ligand>
        <name>NAD(+)</name>
        <dbReference type="ChEBI" id="CHEBI:57540"/>
    </ligand>
</feature>
<feature type="binding site" evidence="1">
    <location>
        <position position="195"/>
    </location>
    <ligand>
        <name>NAD(+)</name>
        <dbReference type="ChEBI" id="CHEBI:57540"/>
    </ligand>
</feature>
<feature type="binding site" evidence="1">
    <location>
        <position position="200"/>
    </location>
    <ligand>
        <name>NAD(+)</name>
        <dbReference type="ChEBI" id="CHEBI:57540"/>
    </ligand>
</feature>
<feature type="binding site" evidence="1">
    <location>
        <begin position="262"/>
        <end position="264"/>
    </location>
    <ligand>
        <name>NAD(+)</name>
        <dbReference type="ChEBI" id="CHEBI:57540"/>
    </ligand>
</feature>
<feature type="binding site" evidence="1">
    <location>
        <begin position="286"/>
        <end position="287"/>
    </location>
    <ligand>
        <name>NAD(+)</name>
        <dbReference type="ChEBI" id="CHEBI:57540"/>
    </ligand>
</feature>
<feature type="site" description="Important for catalytic activity for the proton relay mechanism but does not participate directly in the coordination of zinc atom" evidence="1">
    <location>
        <position position="148"/>
    </location>
</feature>
<organism>
    <name type="scientific">Shigella boydii serotype 4 (strain Sb227)</name>
    <dbReference type="NCBI Taxonomy" id="300268"/>
    <lineage>
        <taxon>Bacteria</taxon>
        <taxon>Pseudomonadati</taxon>
        <taxon>Pseudomonadota</taxon>
        <taxon>Gammaproteobacteria</taxon>
        <taxon>Enterobacterales</taxon>
        <taxon>Enterobacteriaceae</taxon>
        <taxon>Shigella</taxon>
    </lineage>
</organism>
<comment type="function">
    <text evidence="1">Catalyzes the NAD(+)-dependent oxidation of L-threonine to 2-amino-3-ketobutyrate.</text>
</comment>
<comment type="catalytic activity">
    <reaction evidence="1">
        <text>L-threonine + NAD(+) = (2S)-2-amino-3-oxobutanoate + NADH + H(+)</text>
        <dbReference type="Rhea" id="RHEA:13161"/>
        <dbReference type="ChEBI" id="CHEBI:15378"/>
        <dbReference type="ChEBI" id="CHEBI:57540"/>
        <dbReference type="ChEBI" id="CHEBI:57926"/>
        <dbReference type="ChEBI" id="CHEBI:57945"/>
        <dbReference type="ChEBI" id="CHEBI:78948"/>
        <dbReference type="EC" id="1.1.1.103"/>
    </reaction>
</comment>
<comment type="cofactor">
    <cofactor evidence="1">
        <name>Zn(2+)</name>
        <dbReference type="ChEBI" id="CHEBI:29105"/>
    </cofactor>
    <text evidence="1">Binds 2 Zn(2+) ions per subunit.</text>
</comment>
<comment type="pathway">
    <text evidence="1">Amino-acid degradation; L-threonine degradation via oxydo-reductase pathway; glycine from L-threonine: step 1/2.</text>
</comment>
<comment type="subunit">
    <text evidence="1">Homotetramer.</text>
</comment>
<comment type="subcellular location">
    <subcellularLocation>
        <location evidence="1">Cytoplasm</location>
    </subcellularLocation>
</comment>
<comment type="similarity">
    <text evidence="1">Belongs to the zinc-containing alcohol dehydrogenase family.</text>
</comment>
<keyword id="KW-0963">Cytoplasm</keyword>
<keyword id="KW-0479">Metal-binding</keyword>
<keyword id="KW-0520">NAD</keyword>
<keyword id="KW-0560">Oxidoreductase</keyword>
<keyword id="KW-0862">Zinc</keyword>
<dbReference type="EC" id="1.1.1.103" evidence="1"/>
<dbReference type="EMBL" id="CP000036">
    <property type="protein sequence ID" value="ABB68102.1"/>
    <property type="molecule type" value="Genomic_DNA"/>
</dbReference>
<dbReference type="RefSeq" id="WP_000646014.1">
    <property type="nucleotide sequence ID" value="NC_007613.1"/>
</dbReference>
<dbReference type="SMR" id="Q31V06"/>
<dbReference type="GeneID" id="93778332"/>
<dbReference type="KEGG" id="sbo:SBO_3622"/>
<dbReference type="HOGENOM" id="CLU_026673_11_0_6"/>
<dbReference type="UniPathway" id="UPA00046">
    <property type="reaction ID" value="UER00505"/>
</dbReference>
<dbReference type="Proteomes" id="UP000007067">
    <property type="component" value="Chromosome"/>
</dbReference>
<dbReference type="GO" id="GO:0005737">
    <property type="term" value="C:cytoplasm"/>
    <property type="evidence" value="ECO:0007669"/>
    <property type="project" value="UniProtKB-SubCell"/>
</dbReference>
<dbReference type="GO" id="GO:0008743">
    <property type="term" value="F:L-threonine 3-dehydrogenase activity"/>
    <property type="evidence" value="ECO:0007669"/>
    <property type="project" value="UniProtKB-UniRule"/>
</dbReference>
<dbReference type="GO" id="GO:0008270">
    <property type="term" value="F:zinc ion binding"/>
    <property type="evidence" value="ECO:0007669"/>
    <property type="project" value="UniProtKB-UniRule"/>
</dbReference>
<dbReference type="GO" id="GO:0019518">
    <property type="term" value="P:L-threonine catabolic process to glycine"/>
    <property type="evidence" value="ECO:0007669"/>
    <property type="project" value="UniProtKB-UniPathway"/>
</dbReference>
<dbReference type="FunFam" id="3.40.50.720:FF:000059">
    <property type="entry name" value="L-threonine 3-dehydrogenase"/>
    <property type="match status" value="1"/>
</dbReference>
<dbReference type="Gene3D" id="3.90.180.10">
    <property type="entry name" value="Medium-chain alcohol dehydrogenases, catalytic domain"/>
    <property type="match status" value="1"/>
</dbReference>
<dbReference type="Gene3D" id="3.40.50.720">
    <property type="entry name" value="NAD(P)-binding Rossmann-like Domain"/>
    <property type="match status" value="1"/>
</dbReference>
<dbReference type="HAMAP" id="MF_00627">
    <property type="entry name" value="Thr_dehydrog"/>
    <property type="match status" value="1"/>
</dbReference>
<dbReference type="InterPro" id="IPR013149">
    <property type="entry name" value="ADH-like_C"/>
</dbReference>
<dbReference type="InterPro" id="IPR013154">
    <property type="entry name" value="ADH-like_N"/>
</dbReference>
<dbReference type="InterPro" id="IPR002328">
    <property type="entry name" value="ADH_Zn_CS"/>
</dbReference>
<dbReference type="InterPro" id="IPR011032">
    <property type="entry name" value="GroES-like_sf"/>
</dbReference>
<dbReference type="InterPro" id="IPR004627">
    <property type="entry name" value="L-Threonine_3-DHase"/>
</dbReference>
<dbReference type="InterPro" id="IPR036291">
    <property type="entry name" value="NAD(P)-bd_dom_sf"/>
</dbReference>
<dbReference type="InterPro" id="IPR020843">
    <property type="entry name" value="PKS_ER"/>
</dbReference>
<dbReference type="InterPro" id="IPR050129">
    <property type="entry name" value="Zn_alcohol_dh"/>
</dbReference>
<dbReference type="NCBIfam" id="NF003808">
    <property type="entry name" value="PRK05396.1"/>
    <property type="match status" value="1"/>
</dbReference>
<dbReference type="NCBIfam" id="TIGR00692">
    <property type="entry name" value="tdh"/>
    <property type="match status" value="1"/>
</dbReference>
<dbReference type="PANTHER" id="PTHR43401">
    <property type="entry name" value="L-THREONINE 3-DEHYDROGENASE"/>
    <property type="match status" value="1"/>
</dbReference>
<dbReference type="PANTHER" id="PTHR43401:SF2">
    <property type="entry name" value="L-THREONINE 3-DEHYDROGENASE"/>
    <property type="match status" value="1"/>
</dbReference>
<dbReference type="Pfam" id="PF08240">
    <property type="entry name" value="ADH_N"/>
    <property type="match status" value="1"/>
</dbReference>
<dbReference type="Pfam" id="PF00107">
    <property type="entry name" value="ADH_zinc_N"/>
    <property type="match status" value="1"/>
</dbReference>
<dbReference type="SMART" id="SM00829">
    <property type="entry name" value="PKS_ER"/>
    <property type="match status" value="1"/>
</dbReference>
<dbReference type="SUPFAM" id="SSF50129">
    <property type="entry name" value="GroES-like"/>
    <property type="match status" value="1"/>
</dbReference>
<dbReference type="SUPFAM" id="SSF51735">
    <property type="entry name" value="NAD(P)-binding Rossmann-fold domains"/>
    <property type="match status" value="1"/>
</dbReference>
<dbReference type="PROSITE" id="PS00059">
    <property type="entry name" value="ADH_ZINC"/>
    <property type="match status" value="1"/>
</dbReference>
<gene>
    <name evidence="1" type="primary">tdh</name>
    <name type="ordered locus">SBO_3622</name>
</gene>
<evidence type="ECO:0000255" key="1">
    <source>
        <dbReference type="HAMAP-Rule" id="MF_00627"/>
    </source>
</evidence>
<name>TDH_SHIBS</name>
<protein>
    <recommendedName>
        <fullName evidence="1">L-threonine 3-dehydrogenase</fullName>
        <shortName evidence="1">TDH</shortName>
        <ecNumber evidence="1">1.1.1.103</ecNumber>
    </recommendedName>
</protein>
<reference key="1">
    <citation type="journal article" date="2005" name="Nucleic Acids Res.">
        <title>Genome dynamics and diversity of Shigella species, the etiologic agents of bacillary dysentery.</title>
        <authorList>
            <person name="Yang F."/>
            <person name="Yang J."/>
            <person name="Zhang X."/>
            <person name="Chen L."/>
            <person name="Jiang Y."/>
            <person name="Yan Y."/>
            <person name="Tang X."/>
            <person name="Wang J."/>
            <person name="Xiong Z."/>
            <person name="Dong J."/>
            <person name="Xue Y."/>
            <person name="Zhu Y."/>
            <person name="Xu X."/>
            <person name="Sun L."/>
            <person name="Chen S."/>
            <person name="Nie H."/>
            <person name="Peng J."/>
            <person name="Xu J."/>
            <person name="Wang Y."/>
            <person name="Yuan Z."/>
            <person name="Wen Y."/>
            <person name="Yao Z."/>
            <person name="Shen Y."/>
            <person name="Qiang B."/>
            <person name="Hou Y."/>
            <person name="Yu J."/>
            <person name="Jin Q."/>
        </authorList>
    </citation>
    <scope>NUCLEOTIDE SEQUENCE [LARGE SCALE GENOMIC DNA]</scope>
    <source>
        <strain>Sb227</strain>
    </source>
</reference>
<accession>Q31V06</accession>
<sequence length="341" mass="37255">MKALSKLKAEEGIWMTDVPVPELGHNDLLIKIRKTAICGTDVHIYNWDEWSQKTIPVPMVVGHEYVGEVVGIGQEVKGFKIGDRVSGEGHITCGHCRNCRGGRTHLCRNTIGVGVNRPGCFAEYLVIPAFNAFKIPDNISDDLASIFDPFGNAVHTALSFDLVGEDVLVSGAGPIGIMAAAVAKHVGARNVVITDVNEYRLELARKMGITRAVNVAKENLNDVMAELGMTEGFDVGLEMSGAPPAFRTMLDTMNHGGRIAMLGIPPSDMSIDWTKVIFKGLFIKGIYGREMFETWYKMAALIQSGLDLSPIITHRFSIDDFQKGFDAMRSGQSGKVILSWD</sequence>